<proteinExistence type="inferred from homology"/>
<accession>Q52071</accession>
<keyword id="KW-0535">Nitrogen fixation</keyword>
<keyword id="KW-0614">Plasmid</keyword>
<dbReference type="EMBL" id="X99694">
    <property type="protein sequence ID" value="CAA68022.1"/>
    <property type="molecule type" value="Genomic_DNA"/>
</dbReference>
<dbReference type="SMR" id="Q52071"/>
<dbReference type="GO" id="GO:0009399">
    <property type="term" value="P:nitrogen fixation"/>
    <property type="evidence" value="ECO:0007669"/>
    <property type="project" value="UniProtKB-UniRule"/>
</dbReference>
<dbReference type="HAMAP" id="MF_00529">
    <property type="entry name" value="NifW"/>
    <property type="match status" value="1"/>
</dbReference>
<dbReference type="InterPro" id="IPR004893">
    <property type="entry name" value="NifW"/>
</dbReference>
<dbReference type="Pfam" id="PF03206">
    <property type="entry name" value="NifW"/>
    <property type="match status" value="1"/>
</dbReference>
<comment type="function">
    <text evidence="1">May protect the nitrogenase Fe-Mo protein from oxidative damage.</text>
</comment>
<comment type="subunit">
    <text evidence="1">Homotrimer; associates with NifD.</text>
</comment>
<comment type="similarity">
    <text evidence="2">Belongs to the NifW family.</text>
</comment>
<protein>
    <recommendedName>
        <fullName>Nitrogenase-stabilizing/protective protein NifW</fullName>
    </recommendedName>
</protein>
<name>NIFW_ENTAG</name>
<evidence type="ECO:0000250" key="1"/>
<evidence type="ECO:0000305" key="2"/>
<organism>
    <name type="scientific">Enterobacter agglomerans</name>
    <name type="common">Erwinia herbicola</name>
    <name type="synonym">Pantoea agglomerans</name>
    <dbReference type="NCBI Taxonomy" id="549"/>
    <lineage>
        <taxon>Bacteria</taxon>
        <taxon>Pseudomonadati</taxon>
        <taxon>Pseudomonadota</taxon>
        <taxon>Gammaproteobacteria</taxon>
        <taxon>Enterobacterales</taxon>
        <taxon>Erwiniaceae</taxon>
        <taxon>Pantoea</taxon>
        <taxon>Pantoea agglomerans group</taxon>
    </lineage>
</organism>
<gene>
    <name type="primary">nifW</name>
</gene>
<sequence>MDWFTRIEGVDELESAQSFFDFFELEVDPVLLRSRHLHIMAQFNQRLTAAVPVHFVDEEESDRADWRLARRLLAESYQHTVAGPLNTQSGLAVYQRNNGSFIGWNDLLEVRP</sequence>
<feature type="chain" id="PRO_0000219530" description="Nitrogenase-stabilizing/protective protein NifW">
    <location>
        <begin position="1"/>
        <end position="112"/>
    </location>
</feature>
<reference key="1">
    <citation type="book" date="1993" name="New horizons in nitrogen fixation">
        <title>Identification of a new nif-gene, nifI in the nifUSVWZM-operon of Enterobacter agglomerans 333.</title>
        <editorList>
            <person name="Palacios R."/>
            <person name="Mora J."/>
            <person name="Newton W.E."/>
        </editorList>
        <authorList>
            <person name="Steibl R."/>
            <person name="Steibl H.D."/>
            <person name="Siddavattam D."/>
            <person name="Klingmeuller W."/>
        </authorList>
    </citation>
    <scope>NUCLEOTIDE SEQUENCE [GENOMIC DNA]</scope>
    <source>
        <strain>333</strain>
    </source>
</reference>
<geneLocation type="plasmid">
    <name>pEA3</name>
</geneLocation>